<gene>
    <name evidence="1" type="primary">frr</name>
    <name type="ordered locus">FTF0316</name>
</gene>
<dbReference type="EMBL" id="AM286280">
    <property type="protein sequence ID" value="CAL08332.1"/>
    <property type="molecule type" value="Genomic_DNA"/>
</dbReference>
<dbReference type="RefSeq" id="WP_003021611.1">
    <property type="nucleotide sequence ID" value="NC_008245.1"/>
</dbReference>
<dbReference type="SMR" id="Q14JC9"/>
<dbReference type="KEGG" id="ftf:FTF0316"/>
<dbReference type="HOGENOM" id="CLU_073981_2_0_6"/>
<dbReference type="GO" id="GO:0005829">
    <property type="term" value="C:cytosol"/>
    <property type="evidence" value="ECO:0007669"/>
    <property type="project" value="GOC"/>
</dbReference>
<dbReference type="GO" id="GO:0043023">
    <property type="term" value="F:ribosomal large subunit binding"/>
    <property type="evidence" value="ECO:0007669"/>
    <property type="project" value="TreeGrafter"/>
</dbReference>
<dbReference type="GO" id="GO:0002184">
    <property type="term" value="P:cytoplasmic translational termination"/>
    <property type="evidence" value="ECO:0007669"/>
    <property type="project" value="TreeGrafter"/>
</dbReference>
<dbReference type="CDD" id="cd00520">
    <property type="entry name" value="RRF"/>
    <property type="match status" value="1"/>
</dbReference>
<dbReference type="FunFam" id="1.10.132.20:FF:000001">
    <property type="entry name" value="Ribosome-recycling factor"/>
    <property type="match status" value="1"/>
</dbReference>
<dbReference type="FunFam" id="3.30.1360.40:FF:000001">
    <property type="entry name" value="Ribosome-recycling factor"/>
    <property type="match status" value="1"/>
</dbReference>
<dbReference type="Gene3D" id="3.30.1360.40">
    <property type="match status" value="1"/>
</dbReference>
<dbReference type="Gene3D" id="1.10.132.20">
    <property type="entry name" value="Ribosome-recycling factor"/>
    <property type="match status" value="1"/>
</dbReference>
<dbReference type="HAMAP" id="MF_00040">
    <property type="entry name" value="RRF"/>
    <property type="match status" value="1"/>
</dbReference>
<dbReference type="InterPro" id="IPR002661">
    <property type="entry name" value="Ribosome_recyc_fac"/>
</dbReference>
<dbReference type="InterPro" id="IPR023584">
    <property type="entry name" value="Ribosome_recyc_fac_dom"/>
</dbReference>
<dbReference type="InterPro" id="IPR036191">
    <property type="entry name" value="RRF_sf"/>
</dbReference>
<dbReference type="NCBIfam" id="TIGR00496">
    <property type="entry name" value="frr"/>
    <property type="match status" value="1"/>
</dbReference>
<dbReference type="PANTHER" id="PTHR20982:SF3">
    <property type="entry name" value="MITOCHONDRIAL RIBOSOME RECYCLING FACTOR PSEUDO 1"/>
    <property type="match status" value="1"/>
</dbReference>
<dbReference type="PANTHER" id="PTHR20982">
    <property type="entry name" value="RIBOSOME RECYCLING FACTOR"/>
    <property type="match status" value="1"/>
</dbReference>
<dbReference type="Pfam" id="PF01765">
    <property type="entry name" value="RRF"/>
    <property type="match status" value="1"/>
</dbReference>
<dbReference type="SUPFAM" id="SSF55194">
    <property type="entry name" value="Ribosome recycling factor, RRF"/>
    <property type="match status" value="1"/>
</dbReference>
<comment type="function">
    <text evidence="1">Responsible for the release of ribosomes from messenger RNA at the termination of protein biosynthesis. May increase the efficiency of translation by recycling ribosomes from one round of translation to another.</text>
</comment>
<comment type="subcellular location">
    <subcellularLocation>
        <location evidence="1">Cytoplasm</location>
    </subcellularLocation>
</comment>
<comment type="similarity">
    <text evidence="1">Belongs to the RRF family.</text>
</comment>
<evidence type="ECO:0000255" key="1">
    <source>
        <dbReference type="HAMAP-Rule" id="MF_00040"/>
    </source>
</evidence>
<organism>
    <name type="scientific">Francisella tularensis subsp. tularensis (strain FSC 198)</name>
    <dbReference type="NCBI Taxonomy" id="393115"/>
    <lineage>
        <taxon>Bacteria</taxon>
        <taxon>Pseudomonadati</taxon>
        <taxon>Pseudomonadota</taxon>
        <taxon>Gammaproteobacteria</taxon>
        <taxon>Thiotrichales</taxon>
        <taxon>Francisellaceae</taxon>
        <taxon>Francisella</taxon>
    </lineage>
</organism>
<sequence length="185" mass="20544">MINDILKDAENRMKKSLEVLADDLAKIRTGRAQPDLLAHVTIDYYGVETPITQAANITVLDARTLGITPWEKGLSSKIEKAILTSDLGLNPTNLGDSLRVPMPALNEERRKELVKLVKSETEAGRVSIRNIRRDANGDIKELLKEKEITEDQAKKAEDDIQKITDKMIAQADALAAKKEQDLMAV</sequence>
<name>RRF_FRAT1</name>
<protein>
    <recommendedName>
        <fullName evidence="1">Ribosome-recycling factor</fullName>
        <shortName evidence="1">RRF</shortName>
    </recommendedName>
    <alternativeName>
        <fullName evidence="1">Ribosome-releasing factor</fullName>
    </alternativeName>
</protein>
<proteinExistence type="inferred from homology"/>
<keyword id="KW-0963">Cytoplasm</keyword>
<keyword id="KW-0648">Protein biosynthesis</keyword>
<accession>Q14JC9</accession>
<reference key="1">
    <citation type="journal article" date="2007" name="PLoS ONE">
        <title>Genome sequencing shows that European isolates of Francisella tularensis subspecies tularensis are almost identical to US laboratory strain Schu S4.</title>
        <authorList>
            <person name="Chaudhuri R.R."/>
            <person name="Ren C.-P."/>
            <person name="Desmond L."/>
            <person name="Vincent G.A."/>
            <person name="Silman N.J."/>
            <person name="Brehm J.K."/>
            <person name="Elmore M.J."/>
            <person name="Hudson M.J."/>
            <person name="Forsman M."/>
            <person name="Isherwood K.E."/>
            <person name="Gurycova D."/>
            <person name="Minton N.P."/>
            <person name="Titball R.W."/>
            <person name="Pallen M.J."/>
            <person name="Vipond R."/>
        </authorList>
    </citation>
    <scope>NUCLEOTIDE SEQUENCE [LARGE SCALE GENOMIC DNA]</scope>
    <source>
        <strain>FSC 198</strain>
    </source>
</reference>
<feature type="chain" id="PRO_1000003164" description="Ribosome-recycling factor">
    <location>
        <begin position="1"/>
        <end position="185"/>
    </location>
</feature>